<name>DPO4_LACLM</name>
<evidence type="ECO:0000255" key="1">
    <source>
        <dbReference type="HAMAP-Rule" id="MF_01113"/>
    </source>
</evidence>
<accession>A2RNH9</accession>
<reference key="1">
    <citation type="journal article" date="2007" name="J. Bacteriol.">
        <title>The complete genome sequence of the lactic acid bacterial paradigm Lactococcus lactis subsp. cremoris MG1363.</title>
        <authorList>
            <person name="Wegmann U."/>
            <person name="O'Connell-Motherway M."/>
            <person name="Zomer A."/>
            <person name="Buist G."/>
            <person name="Shearman C."/>
            <person name="Canchaya C."/>
            <person name="Ventura M."/>
            <person name="Goesmann A."/>
            <person name="Gasson M.J."/>
            <person name="Kuipers O.P."/>
            <person name="van Sinderen D."/>
            <person name="Kok J."/>
        </authorList>
    </citation>
    <scope>NUCLEOTIDE SEQUENCE [LARGE SCALE GENOMIC DNA]</scope>
    <source>
        <strain>MG1363</strain>
    </source>
</reference>
<feature type="chain" id="PRO_1000084897" description="DNA polymerase IV">
    <location>
        <begin position="1"/>
        <end position="364"/>
    </location>
</feature>
<feature type="domain" description="UmuC" evidence="1">
    <location>
        <begin position="14"/>
        <end position="198"/>
    </location>
</feature>
<feature type="active site" evidence="1">
    <location>
        <position position="117"/>
    </location>
</feature>
<feature type="binding site" evidence="1">
    <location>
        <position position="18"/>
    </location>
    <ligand>
        <name>Mg(2+)</name>
        <dbReference type="ChEBI" id="CHEBI:18420"/>
    </ligand>
</feature>
<feature type="binding site" evidence="1">
    <location>
        <position position="116"/>
    </location>
    <ligand>
        <name>Mg(2+)</name>
        <dbReference type="ChEBI" id="CHEBI:18420"/>
    </ligand>
</feature>
<feature type="site" description="Substrate discrimination" evidence="1">
    <location>
        <position position="23"/>
    </location>
</feature>
<gene>
    <name evidence="1" type="primary">dinB</name>
    <name type="ordered locus">llmg_2305</name>
</gene>
<comment type="function">
    <text evidence="1">Poorly processive, error-prone DNA polymerase involved in untargeted mutagenesis. Copies undamaged DNA at stalled replication forks, which arise in vivo from mismatched or misaligned primer ends. These misaligned primers can be extended by PolIV. Exhibits no 3'-5' exonuclease (proofreading) activity. May be involved in translesional synthesis, in conjunction with the beta clamp from PolIII.</text>
</comment>
<comment type="catalytic activity">
    <reaction evidence="1">
        <text>DNA(n) + a 2'-deoxyribonucleoside 5'-triphosphate = DNA(n+1) + diphosphate</text>
        <dbReference type="Rhea" id="RHEA:22508"/>
        <dbReference type="Rhea" id="RHEA-COMP:17339"/>
        <dbReference type="Rhea" id="RHEA-COMP:17340"/>
        <dbReference type="ChEBI" id="CHEBI:33019"/>
        <dbReference type="ChEBI" id="CHEBI:61560"/>
        <dbReference type="ChEBI" id="CHEBI:173112"/>
        <dbReference type="EC" id="2.7.7.7"/>
    </reaction>
</comment>
<comment type="cofactor">
    <cofactor evidence="1">
        <name>Mg(2+)</name>
        <dbReference type="ChEBI" id="CHEBI:18420"/>
    </cofactor>
    <text evidence="1">Binds 2 magnesium ions per subunit.</text>
</comment>
<comment type="subunit">
    <text evidence="1">Monomer.</text>
</comment>
<comment type="subcellular location">
    <subcellularLocation>
        <location evidence="1">Cytoplasm</location>
    </subcellularLocation>
</comment>
<comment type="similarity">
    <text evidence="1">Belongs to the DNA polymerase type-Y family.</text>
</comment>
<organism>
    <name type="scientific">Lactococcus lactis subsp. cremoris (strain MG1363)</name>
    <dbReference type="NCBI Taxonomy" id="416870"/>
    <lineage>
        <taxon>Bacteria</taxon>
        <taxon>Bacillati</taxon>
        <taxon>Bacillota</taxon>
        <taxon>Bacilli</taxon>
        <taxon>Lactobacillales</taxon>
        <taxon>Streptococcaceae</taxon>
        <taxon>Lactococcus</taxon>
        <taxon>Lactococcus cremoris subsp. cremoris</taxon>
    </lineage>
</organism>
<dbReference type="EC" id="2.7.7.7" evidence="1"/>
<dbReference type="EMBL" id="AM406671">
    <property type="protein sequence ID" value="CAL98869.1"/>
    <property type="molecule type" value="Genomic_DNA"/>
</dbReference>
<dbReference type="RefSeq" id="WP_011835978.1">
    <property type="nucleotide sequence ID" value="NC_009004.1"/>
</dbReference>
<dbReference type="SMR" id="A2RNH9"/>
<dbReference type="STRING" id="416870.llmg_2305"/>
<dbReference type="KEGG" id="llm:llmg_2305"/>
<dbReference type="eggNOG" id="COG0389">
    <property type="taxonomic scope" value="Bacteria"/>
</dbReference>
<dbReference type="HOGENOM" id="CLU_012348_1_2_9"/>
<dbReference type="OrthoDB" id="9808813at2"/>
<dbReference type="PhylomeDB" id="A2RNH9"/>
<dbReference type="Proteomes" id="UP000000364">
    <property type="component" value="Chromosome"/>
</dbReference>
<dbReference type="GO" id="GO:0005829">
    <property type="term" value="C:cytosol"/>
    <property type="evidence" value="ECO:0007669"/>
    <property type="project" value="TreeGrafter"/>
</dbReference>
<dbReference type="GO" id="GO:0003684">
    <property type="term" value="F:damaged DNA binding"/>
    <property type="evidence" value="ECO:0007669"/>
    <property type="project" value="InterPro"/>
</dbReference>
<dbReference type="GO" id="GO:0003887">
    <property type="term" value="F:DNA-directed DNA polymerase activity"/>
    <property type="evidence" value="ECO:0007669"/>
    <property type="project" value="UniProtKB-UniRule"/>
</dbReference>
<dbReference type="GO" id="GO:0000287">
    <property type="term" value="F:magnesium ion binding"/>
    <property type="evidence" value="ECO:0007669"/>
    <property type="project" value="UniProtKB-UniRule"/>
</dbReference>
<dbReference type="GO" id="GO:0006261">
    <property type="term" value="P:DNA-templated DNA replication"/>
    <property type="evidence" value="ECO:0007669"/>
    <property type="project" value="UniProtKB-UniRule"/>
</dbReference>
<dbReference type="GO" id="GO:0042276">
    <property type="term" value="P:error-prone translesion synthesis"/>
    <property type="evidence" value="ECO:0007669"/>
    <property type="project" value="TreeGrafter"/>
</dbReference>
<dbReference type="GO" id="GO:0009432">
    <property type="term" value="P:SOS response"/>
    <property type="evidence" value="ECO:0007669"/>
    <property type="project" value="TreeGrafter"/>
</dbReference>
<dbReference type="CDD" id="cd03586">
    <property type="entry name" value="PolY_Pol_IV_kappa"/>
    <property type="match status" value="1"/>
</dbReference>
<dbReference type="FunFam" id="3.30.1490.100:FF:000004">
    <property type="entry name" value="DNA polymerase IV"/>
    <property type="match status" value="1"/>
</dbReference>
<dbReference type="FunFam" id="3.40.1170.60:FF:000001">
    <property type="entry name" value="DNA polymerase IV"/>
    <property type="match status" value="1"/>
</dbReference>
<dbReference type="Gene3D" id="3.30.70.270">
    <property type="match status" value="1"/>
</dbReference>
<dbReference type="Gene3D" id="3.40.1170.60">
    <property type="match status" value="1"/>
</dbReference>
<dbReference type="Gene3D" id="1.10.150.20">
    <property type="entry name" value="5' to 3' exonuclease, C-terminal subdomain"/>
    <property type="match status" value="1"/>
</dbReference>
<dbReference type="Gene3D" id="3.30.1490.100">
    <property type="entry name" value="DNA polymerase, Y-family, little finger domain"/>
    <property type="match status" value="1"/>
</dbReference>
<dbReference type="HAMAP" id="MF_01113">
    <property type="entry name" value="DNApol_IV"/>
    <property type="match status" value="1"/>
</dbReference>
<dbReference type="InterPro" id="IPR043502">
    <property type="entry name" value="DNA/RNA_pol_sf"/>
</dbReference>
<dbReference type="InterPro" id="IPR036775">
    <property type="entry name" value="DNA_pol_Y-fam_lit_finger_sf"/>
</dbReference>
<dbReference type="InterPro" id="IPR017961">
    <property type="entry name" value="DNA_pol_Y-fam_little_finger"/>
</dbReference>
<dbReference type="InterPro" id="IPR050116">
    <property type="entry name" value="DNA_polymerase-Y"/>
</dbReference>
<dbReference type="InterPro" id="IPR022880">
    <property type="entry name" value="DNApol_IV"/>
</dbReference>
<dbReference type="InterPro" id="IPR024728">
    <property type="entry name" value="PolY_HhH_motif"/>
</dbReference>
<dbReference type="InterPro" id="IPR043128">
    <property type="entry name" value="Rev_trsase/Diguanyl_cyclase"/>
</dbReference>
<dbReference type="InterPro" id="IPR001126">
    <property type="entry name" value="UmuC"/>
</dbReference>
<dbReference type="NCBIfam" id="NF002677">
    <property type="entry name" value="PRK02406.1"/>
    <property type="match status" value="1"/>
</dbReference>
<dbReference type="PANTHER" id="PTHR11076:SF33">
    <property type="entry name" value="DNA POLYMERASE KAPPA"/>
    <property type="match status" value="1"/>
</dbReference>
<dbReference type="PANTHER" id="PTHR11076">
    <property type="entry name" value="DNA REPAIR POLYMERASE UMUC / TRANSFERASE FAMILY MEMBER"/>
    <property type="match status" value="1"/>
</dbReference>
<dbReference type="Pfam" id="PF00817">
    <property type="entry name" value="IMS"/>
    <property type="match status" value="1"/>
</dbReference>
<dbReference type="Pfam" id="PF11799">
    <property type="entry name" value="IMS_C"/>
    <property type="match status" value="1"/>
</dbReference>
<dbReference type="Pfam" id="PF11798">
    <property type="entry name" value="IMS_HHH"/>
    <property type="match status" value="1"/>
</dbReference>
<dbReference type="SUPFAM" id="SSF56672">
    <property type="entry name" value="DNA/RNA polymerases"/>
    <property type="match status" value="1"/>
</dbReference>
<dbReference type="SUPFAM" id="SSF100879">
    <property type="entry name" value="Lesion bypass DNA polymerase (Y-family), little finger domain"/>
    <property type="match status" value="1"/>
</dbReference>
<dbReference type="PROSITE" id="PS50173">
    <property type="entry name" value="UMUC"/>
    <property type="match status" value="1"/>
</dbReference>
<proteinExistence type="inferred from homology"/>
<sequence>MLTFPLINDTSRKIIHIDMDAFFASVEVRDNPSLKGKPVVIARNPLQTGGRGVVSTCSYEARAFGIHSAMSAKEAYDLCPQAIFISGNYEKYTKVSKQVREIFKRYTDNIEAASIDEAYLDVTENKIGAQSAIKIAKLIQHDIFVELGLTCSAGVSYNKFLAKIASDYEKPHGLTLIMPDEALEFLAKLPVEKFHGVGKATVPKLHALGFFTGGDLQKADPVDLAERFGIYGWELFQKANGIHNSKVKNHRERKSVGKERTYGKLLYLPDDIKAELIKISKQVSESLKRHQLKGNIIILKLRYSDFTTLTKRKSMVENLDSPEDIAEAARQIFEEIDYDESLGVRLLGVTVSGFGVQKATLDMQ</sequence>
<keyword id="KW-0963">Cytoplasm</keyword>
<keyword id="KW-0227">DNA damage</keyword>
<keyword id="KW-0234">DNA repair</keyword>
<keyword id="KW-0235">DNA replication</keyword>
<keyword id="KW-0238">DNA-binding</keyword>
<keyword id="KW-0239">DNA-directed DNA polymerase</keyword>
<keyword id="KW-0460">Magnesium</keyword>
<keyword id="KW-0479">Metal-binding</keyword>
<keyword id="KW-0515">Mutator protein</keyword>
<keyword id="KW-0548">Nucleotidyltransferase</keyword>
<keyword id="KW-0808">Transferase</keyword>
<protein>
    <recommendedName>
        <fullName evidence="1">DNA polymerase IV</fullName>
        <shortName evidence="1">Pol IV</shortName>
        <ecNumber evidence="1">2.7.7.7</ecNumber>
    </recommendedName>
</protein>